<evidence type="ECO:0000255" key="1">
    <source>
        <dbReference type="HAMAP-Rule" id="MF_00074"/>
    </source>
</evidence>
<evidence type="ECO:0000256" key="2">
    <source>
        <dbReference type="SAM" id="MobiDB-lite"/>
    </source>
</evidence>
<proteinExistence type="inferred from homology"/>
<accession>Q2YZC0</accession>
<name>RSMG_STAAB</name>
<comment type="function">
    <text evidence="1">Specifically methylates the N7 position of guanine in position 535 of 16S rRNA.</text>
</comment>
<comment type="subcellular location">
    <subcellularLocation>
        <location evidence="1">Cytoplasm</location>
    </subcellularLocation>
</comment>
<comment type="similarity">
    <text evidence="1">Belongs to the methyltransferase superfamily. RNA methyltransferase RsmG family.</text>
</comment>
<dbReference type="EC" id="2.1.1.-" evidence="1"/>
<dbReference type="EMBL" id="AJ938182">
    <property type="protein sequence ID" value="CAI82274.1"/>
    <property type="molecule type" value="Genomic_DNA"/>
</dbReference>
<dbReference type="RefSeq" id="WP_000215584.1">
    <property type="nucleotide sequence ID" value="NC_007622.1"/>
</dbReference>
<dbReference type="SMR" id="Q2YZC0"/>
<dbReference type="KEGG" id="sab:SAB2586c"/>
<dbReference type="HOGENOM" id="CLU_065341_0_0_9"/>
<dbReference type="GO" id="GO:0005829">
    <property type="term" value="C:cytosol"/>
    <property type="evidence" value="ECO:0007669"/>
    <property type="project" value="TreeGrafter"/>
</dbReference>
<dbReference type="GO" id="GO:0070043">
    <property type="term" value="F:rRNA (guanine-N7-)-methyltransferase activity"/>
    <property type="evidence" value="ECO:0007669"/>
    <property type="project" value="UniProtKB-UniRule"/>
</dbReference>
<dbReference type="CDD" id="cd02440">
    <property type="entry name" value="AdoMet_MTases"/>
    <property type="match status" value="1"/>
</dbReference>
<dbReference type="FunFam" id="3.40.50.150:FF:000041">
    <property type="entry name" value="Ribosomal RNA small subunit methyltransferase G"/>
    <property type="match status" value="1"/>
</dbReference>
<dbReference type="Gene3D" id="3.40.50.150">
    <property type="entry name" value="Vaccinia Virus protein VP39"/>
    <property type="match status" value="1"/>
</dbReference>
<dbReference type="HAMAP" id="MF_00074">
    <property type="entry name" value="16SrRNA_methyltr_G"/>
    <property type="match status" value="1"/>
</dbReference>
<dbReference type="InterPro" id="IPR003682">
    <property type="entry name" value="rRNA_ssu_MeTfrase_G"/>
</dbReference>
<dbReference type="InterPro" id="IPR029063">
    <property type="entry name" value="SAM-dependent_MTases_sf"/>
</dbReference>
<dbReference type="NCBIfam" id="TIGR00138">
    <property type="entry name" value="rsmG_gidB"/>
    <property type="match status" value="1"/>
</dbReference>
<dbReference type="PANTHER" id="PTHR31760">
    <property type="entry name" value="S-ADENOSYL-L-METHIONINE-DEPENDENT METHYLTRANSFERASES SUPERFAMILY PROTEIN"/>
    <property type="match status" value="1"/>
</dbReference>
<dbReference type="PANTHER" id="PTHR31760:SF0">
    <property type="entry name" value="S-ADENOSYL-L-METHIONINE-DEPENDENT METHYLTRANSFERASES SUPERFAMILY PROTEIN"/>
    <property type="match status" value="1"/>
</dbReference>
<dbReference type="Pfam" id="PF02527">
    <property type="entry name" value="GidB"/>
    <property type="match status" value="1"/>
</dbReference>
<dbReference type="PIRSF" id="PIRSF003078">
    <property type="entry name" value="GidB"/>
    <property type="match status" value="1"/>
</dbReference>
<dbReference type="SUPFAM" id="SSF53335">
    <property type="entry name" value="S-adenosyl-L-methionine-dependent methyltransferases"/>
    <property type="match status" value="1"/>
</dbReference>
<gene>
    <name evidence="1" type="primary">rsmG</name>
    <name type="ordered locus">SAB2586c</name>
</gene>
<feature type="chain" id="PRO_1000010216" description="Ribosomal RNA small subunit methyltransferase G">
    <location>
        <begin position="1"/>
        <end position="239"/>
    </location>
</feature>
<feature type="region of interest" description="Disordered" evidence="2">
    <location>
        <begin position="215"/>
        <end position="239"/>
    </location>
</feature>
<feature type="binding site" evidence="1">
    <location>
        <position position="77"/>
    </location>
    <ligand>
        <name>S-adenosyl-L-methionine</name>
        <dbReference type="ChEBI" id="CHEBI:59789"/>
    </ligand>
</feature>
<feature type="binding site" evidence="1">
    <location>
        <position position="82"/>
    </location>
    <ligand>
        <name>S-adenosyl-L-methionine</name>
        <dbReference type="ChEBI" id="CHEBI:59789"/>
    </ligand>
</feature>
<feature type="binding site" evidence="1">
    <location>
        <begin position="128"/>
        <end position="129"/>
    </location>
    <ligand>
        <name>S-adenosyl-L-methionine</name>
        <dbReference type="ChEBI" id="CHEBI:59789"/>
    </ligand>
</feature>
<feature type="binding site" evidence="1">
    <location>
        <position position="146"/>
    </location>
    <ligand>
        <name>S-adenosyl-L-methionine</name>
        <dbReference type="ChEBI" id="CHEBI:59789"/>
    </ligand>
</feature>
<organism>
    <name type="scientific">Staphylococcus aureus (strain bovine RF122 / ET3-1)</name>
    <dbReference type="NCBI Taxonomy" id="273036"/>
    <lineage>
        <taxon>Bacteria</taxon>
        <taxon>Bacillati</taxon>
        <taxon>Bacillota</taxon>
        <taxon>Bacilli</taxon>
        <taxon>Bacillales</taxon>
        <taxon>Staphylococcaceae</taxon>
        <taxon>Staphylococcus</taxon>
    </lineage>
</organism>
<keyword id="KW-0963">Cytoplasm</keyword>
<keyword id="KW-0489">Methyltransferase</keyword>
<keyword id="KW-0698">rRNA processing</keyword>
<keyword id="KW-0949">S-adenosyl-L-methionine</keyword>
<keyword id="KW-0808">Transferase</keyword>
<sequence>MTVEWLAEQLKEHNIELTETQKQQFQTYYCLLVEWNEKMNLTSITDEHDVYLKHFYDSIAPSFYFDFNQPISICDVGAGAGFPSIPLKIMFPQLKVTIVDSLNKRIQFLNHLASELQLQDVSFIHDRAETFGKGVYRESYDVVTARAVARLSVLSELCLPLVKKGGQFVALKSSKGEEELEEAKFAISVLGGNVTETHTYELPEDAGERQMFIIDKKRQTPKKYPRKPGTPNKTPLLEK</sequence>
<reference key="1">
    <citation type="journal article" date="2007" name="PLoS ONE">
        <title>Molecular correlates of host specialization in Staphylococcus aureus.</title>
        <authorList>
            <person name="Herron-Olson L."/>
            <person name="Fitzgerald J.R."/>
            <person name="Musser J.M."/>
            <person name="Kapur V."/>
        </authorList>
    </citation>
    <scope>NUCLEOTIDE SEQUENCE [LARGE SCALE GENOMIC DNA]</scope>
    <source>
        <strain>bovine RF122 / ET3-1</strain>
    </source>
</reference>
<protein>
    <recommendedName>
        <fullName evidence="1">Ribosomal RNA small subunit methyltransferase G</fullName>
        <ecNumber evidence="1">2.1.1.-</ecNumber>
    </recommendedName>
    <alternativeName>
        <fullName evidence="1">16S rRNA 7-methylguanosine methyltransferase</fullName>
        <shortName evidence="1">16S rRNA m7G methyltransferase</shortName>
    </alternativeName>
</protein>